<dbReference type="EMBL" id="Y14083">
    <property type="protein sequence ID" value="CAA74534.1"/>
    <property type="molecule type" value="Genomic_DNA"/>
</dbReference>
<dbReference type="EMBL" id="AL009126">
    <property type="protein sequence ID" value="CAB12868.1"/>
    <property type="molecule type" value="Genomic_DNA"/>
</dbReference>
<dbReference type="PIR" id="B69831">
    <property type="entry name" value="B69831"/>
</dbReference>
<dbReference type="RefSeq" id="NP_388909.1">
    <property type="nucleotide sequence ID" value="NC_000964.3"/>
</dbReference>
<dbReference type="RefSeq" id="WP_003245187.1">
    <property type="nucleotide sequence ID" value="NZ_OZ025638.1"/>
</dbReference>
<dbReference type="SMR" id="O07611"/>
<dbReference type="FunCoup" id="O07611">
    <property type="interactions" value="100"/>
</dbReference>
<dbReference type="STRING" id="224308.BSU10280"/>
<dbReference type="PaxDb" id="224308-BSU10280"/>
<dbReference type="EnsemblBacteria" id="CAB12868">
    <property type="protein sequence ID" value="CAB12868"/>
    <property type="gene ID" value="BSU_10280"/>
</dbReference>
<dbReference type="GeneID" id="936312"/>
<dbReference type="KEGG" id="bsu:BSU10280"/>
<dbReference type="PATRIC" id="fig|224308.179.peg.1104"/>
<dbReference type="eggNOG" id="ENOG5030CIX">
    <property type="taxonomic scope" value="Bacteria"/>
</dbReference>
<dbReference type="InParanoid" id="O07611"/>
<dbReference type="OrthoDB" id="2905447at2"/>
<dbReference type="BioCyc" id="BSUB:BSU10280-MONOMER"/>
<dbReference type="Proteomes" id="UP000001570">
    <property type="component" value="Chromosome"/>
</dbReference>
<sequence>MKKIVAAIVVIGLVFIAFFYLYSRSGDVYQSVDADLITLSSSGQEDIEIEKRQHVKDMLDIMNQGKQVKTEKTSAPDYEGTIKFHKDRYDSFRLWIDGSQQAVFLKDGTYYKLSKNDTKALLNIIKKEAKD</sequence>
<organism>
    <name type="scientific">Bacillus subtilis (strain 168)</name>
    <dbReference type="NCBI Taxonomy" id="224308"/>
    <lineage>
        <taxon>Bacteria</taxon>
        <taxon>Bacillati</taxon>
        <taxon>Bacillota</taxon>
        <taxon>Bacilli</taxon>
        <taxon>Bacillales</taxon>
        <taxon>Bacillaceae</taxon>
        <taxon>Bacillus</taxon>
    </lineage>
</organism>
<gene>
    <name type="primary">yhfM</name>
    <name type="ordered locus">BSU10280</name>
</gene>
<accession>O07611</accession>
<name>YHFM_BACSU</name>
<keyword id="KW-1185">Reference proteome</keyword>
<keyword id="KW-0732">Signal</keyword>
<protein>
    <recommendedName>
        <fullName>Uncharacterized protein YhfM</fullName>
    </recommendedName>
</protein>
<reference key="1">
    <citation type="journal article" date="1998" name="Microbiology">
        <title>The 172 kb prkA-addAB region from 83 degrees to 97 degrees of the Bacillus subtilis chromosome contains several dysfunctional genes, the glyB marker, many genes encoding transporter proteins, and the ubiquitous hit gene.</title>
        <authorList>
            <person name="Noback M.A."/>
            <person name="Holsappel S."/>
            <person name="Kiewiet R."/>
            <person name="Terpstra P."/>
            <person name="Wambutt R."/>
            <person name="Wedler H."/>
            <person name="Venema G."/>
            <person name="Bron S."/>
        </authorList>
    </citation>
    <scope>NUCLEOTIDE SEQUENCE [GENOMIC DNA]</scope>
    <source>
        <strain>168</strain>
    </source>
</reference>
<reference key="2">
    <citation type="journal article" date="1997" name="Nature">
        <title>The complete genome sequence of the Gram-positive bacterium Bacillus subtilis.</title>
        <authorList>
            <person name="Kunst F."/>
            <person name="Ogasawara N."/>
            <person name="Moszer I."/>
            <person name="Albertini A.M."/>
            <person name="Alloni G."/>
            <person name="Azevedo V."/>
            <person name="Bertero M.G."/>
            <person name="Bessieres P."/>
            <person name="Bolotin A."/>
            <person name="Borchert S."/>
            <person name="Borriss R."/>
            <person name="Boursier L."/>
            <person name="Brans A."/>
            <person name="Braun M."/>
            <person name="Brignell S.C."/>
            <person name="Bron S."/>
            <person name="Brouillet S."/>
            <person name="Bruschi C.V."/>
            <person name="Caldwell B."/>
            <person name="Capuano V."/>
            <person name="Carter N.M."/>
            <person name="Choi S.-K."/>
            <person name="Codani J.-J."/>
            <person name="Connerton I.F."/>
            <person name="Cummings N.J."/>
            <person name="Daniel R.A."/>
            <person name="Denizot F."/>
            <person name="Devine K.M."/>
            <person name="Duesterhoeft A."/>
            <person name="Ehrlich S.D."/>
            <person name="Emmerson P.T."/>
            <person name="Entian K.-D."/>
            <person name="Errington J."/>
            <person name="Fabret C."/>
            <person name="Ferrari E."/>
            <person name="Foulger D."/>
            <person name="Fritz C."/>
            <person name="Fujita M."/>
            <person name="Fujita Y."/>
            <person name="Fuma S."/>
            <person name="Galizzi A."/>
            <person name="Galleron N."/>
            <person name="Ghim S.-Y."/>
            <person name="Glaser P."/>
            <person name="Goffeau A."/>
            <person name="Golightly E.J."/>
            <person name="Grandi G."/>
            <person name="Guiseppi G."/>
            <person name="Guy B.J."/>
            <person name="Haga K."/>
            <person name="Haiech J."/>
            <person name="Harwood C.R."/>
            <person name="Henaut A."/>
            <person name="Hilbert H."/>
            <person name="Holsappel S."/>
            <person name="Hosono S."/>
            <person name="Hullo M.-F."/>
            <person name="Itaya M."/>
            <person name="Jones L.-M."/>
            <person name="Joris B."/>
            <person name="Karamata D."/>
            <person name="Kasahara Y."/>
            <person name="Klaerr-Blanchard M."/>
            <person name="Klein C."/>
            <person name="Kobayashi Y."/>
            <person name="Koetter P."/>
            <person name="Koningstein G."/>
            <person name="Krogh S."/>
            <person name="Kumano M."/>
            <person name="Kurita K."/>
            <person name="Lapidus A."/>
            <person name="Lardinois S."/>
            <person name="Lauber J."/>
            <person name="Lazarevic V."/>
            <person name="Lee S.-M."/>
            <person name="Levine A."/>
            <person name="Liu H."/>
            <person name="Masuda S."/>
            <person name="Mauel C."/>
            <person name="Medigue C."/>
            <person name="Medina N."/>
            <person name="Mellado R.P."/>
            <person name="Mizuno M."/>
            <person name="Moestl D."/>
            <person name="Nakai S."/>
            <person name="Noback M."/>
            <person name="Noone D."/>
            <person name="O'Reilly M."/>
            <person name="Ogawa K."/>
            <person name="Ogiwara A."/>
            <person name="Oudega B."/>
            <person name="Park S.-H."/>
            <person name="Parro V."/>
            <person name="Pohl T.M."/>
            <person name="Portetelle D."/>
            <person name="Porwollik S."/>
            <person name="Prescott A.M."/>
            <person name="Presecan E."/>
            <person name="Pujic P."/>
            <person name="Purnelle B."/>
            <person name="Rapoport G."/>
            <person name="Rey M."/>
            <person name="Reynolds S."/>
            <person name="Rieger M."/>
            <person name="Rivolta C."/>
            <person name="Rocha E."/>
            <person name="Roche B."/>
            <person name="Rose M."/>
            <person name="Sadaie Y."/>
            <person name="Sato T."/>
            <person name="Scanlan E."/>
            <person name="Schleich S."/>
            <person name="Schroeter R."/>
            <person name="Scoffone F."/>
            <person name="Sekiguchi J."/>
            <person name="Sekowska A."/>
            <person name="Seror S.J."/>
            <person name="Serror P."/>
            <person name="Shin B.-S."/>
            <person name="Soldo B."/>
            <person name="Sorokin A."/>
            <person name="Tacconi E."/>
            <person name="Takagi T."/>
            <person name="Takahashi H."/>
            <person name="Takemaru K."/>
            <person name="Takeuchi M."/>
            <person name="Tamakoshi A."/>
            <person name="Tanaka T."/>
            <person name="Terpstra P."/>
            <person name="Tognoni A."/>
            <person name="Tosato V."/>
            <person name="Uchiyama S."/>
            <person name="Vandenbol M."/>
            <person name="Vannier F."/>
            <person name="Vassarotti A."/>
            <person name="Viari A."/>
            <person name="Wambutt R."/>
            <person name="Wedler E."/>
            <person name="Wedler H."/>
            <person name="Weitzenegger T."/>
            <person name="Winters P."/>
            <person name="Wipat A."/>
            <person name="Yamamoto H."/>
            <person name="Yamane K."/>
            <person name="Yasumoto K."/>
            <person name="Yata K."/>
            <person name="Yoshida K."/>
            <person name="Yoshikawa H.-F."/>
            <person name="Zumstein E."/>
            <person name="Yoshikawa H."/>
            <person name="Danchin A."/>
        </authorList>
    </citation>
    <scope>NUCLEOTIDE SEQUENCE [LARGE SCALE GENOMIC DNA]</scope>
    <source>
        <strain>168</strain>
    </source>
</reference>
<proteinExistence type="inferred from homology"/>
<feature type="signal peptide" evidence="1">
    <location>
        <begin position="1"/>
        <end position="26"/>
    </location>
</feature>
<feature type="chain" id="PRO_0000013701" description="Uncharacterized protein YhfM">
    <location>
        <begin position="27"/>
        <end position="131"/>
    </location>
</feature>
<evidence type="ECO:0000255" key="1"/>